<dbReference type="EC" id="2.7.11.1"/>
<dbReference type="EMBL" id="AB007821">
    <property type="protein sequence ID" value="BAA28755.1"/>
    <property type="molecule type" value="mRNA"/>
</dbReference>
<dbReference type="EMBL" id="AB007822">
    <property type="protein sequence ID" value="BAA28756.1"/>
    <property type="molecule type" value="mRNA"/>
</dbReference>
<dbReference type="EMBL" id="U87984">
    <property type="protein sequence ID" value="AAB49642.1"/>
    <property type="molecule type" value="mRNA"/>
</dbReference>
<dbReference type="EMBL" id="AE014134">
    <property type="protein sequence ID" value="AAF53867.2"/>
    <property type="molecule type" value="Genomic_DNA"/>
</dbReference>
<dbReference type="EMBL" id="AE014134">
    <property type="protein sequence ID" value="AAN11062.1"/>
    <property type="molecule type" value="Genomic_DNA"/>
</dbReference>
<dbReference type="EMBL" id="AY070549">
    <property type="protein sequence ID" value="AAL48020.1"/>
    <property type="molecule type" value="mRNA"/>
</dbReference>
<dbReference type="RefSeq" id="NP_477218.1">
    <molecule id="O61267-2"/>
    <property type="nucleotide sequence ID" value="NM_057870.4"/>
</dbReference>
<dbReference type="RefSeq" id="NP_477219.1">
    <molecule id="O61267-1"/>
    <property type="nucleotide sequence ID" value="NM_057871.4"/>
</dbReference>
<dbReference type="RefSeq" id="NP_724241.1">
    <molecule id="O61267-2"/>
    <property type="nucleotide sequence ID" value="NM_165318.3"/>
</dbReference>
<dbReference type="SMR" id="O61267"/>
<dbReference type="BioGRID" id="61259">
    <property type="interactions" value="56"/>
</dbReference>
<dbReference type="FunCoup" id="O61267">
    <property type="interactions" value="1380"/>
</dbReference>
<dbReference type="IntAct" id="O61267">
    <property type="interactions" value="12"/>
</dbReference>
<dbReference type="STRING" id="7227.FBpp0080860"/>
<dbReference type="PaxDb" id="7227-FBpp0080860"/>
<dbReference type="DNASU" id="35288"/>
<dbReference type="EnsemblMetazoa" id="FBtr0081328">
    <molecule id="O61267-1"/>
    <property type="protein sequence ID" value="FBpp0080860"/>
    <property type="gene ID" value="FBgn0019686"/>
</dbReference>
<dbReference type="EnsemblMetazoa" id="FBtr0081329">
    <molecule id="O61267-2"/>
    <property type="protein sequence ID" value="FBpp0080861"/>
    <property type="gene ID" value="FBgn0019686"/>
</dbReference>
<dbReference type="EnsemblMetazoa" id="FBtr0081330">
    <molecule id="O61267-2"/>
    <property type="protein sequence ID" value="FBpp0080862"/>
    <property type="gene ID" value="FBgn0019686"/>
</dbReference>
<dbReference type="GeneID" id="35288"/>
<dbReference type="KEGG" id="dme:Dmel_CG10895"/>
<dbReference type="AGR" id="FB:FBgn0019686"/>
<dbReference type="CTD" id="35288"/>
<dbReference type="FlyBase" id="FBgn0019686">
    <property type="gene designation" value="lok"/>
</dbReference>
<dbReference type="VEuPathDB" id="VectorBase:FBgn0019686"/>
<dbReference type="eggNOG" id="KOG0615">
    <property type="taxonomic scope" value="Eukaryota"/>
</dbReference>
<dbReference type="GeneTree" id="ENSGT00800000124190"/>
<dbReference type="InParanoid" id="O61267"/>
<dbReference type="OMA" id="FAYGHPA"/>
<dbReference type="OrthoDB" id="40902at2759"/>
<dbReference type="PhylomeDB" id="O61267"/>
<dbReference type="BRENDA" id="2.7.11.1">
    <property type="organism ID" value="1994"/>
</dbReference>
<dbReference type="Reactome" id="R-DME-5693565">
    <property type="pathway name" value="Recruitment and ATM-mediated phosphorylation of repair and signaling proteins at DNA double strand breaks"/>
</dbReference>
<dbReference type="Reactome" id="R-DME-6804756">
    <property type="pathway name" value="Regulation of TP53 Activity through Phosphorylation"/>
</dbReference>
<dbReference type="Reactome" id="R-DME-69473">
    <property type="pathway name" value="G2/M DNA damage checkpoint"/>
</dbReference>
<dbReference type="Reactome" id="R-DME-69541">
    <property type="pathway name" value="Stabilization of p53"/>
</dbReference>
<dbReference type="Reactome" id="R-DME-69601">
    <property type="pathway name" value="Ubiquitin Mediated Degradation of Phosphorylated Cdc25A"/>
</dbReference>
<dbReference type="Reactome" id="R-DME-75035">
    <property type="pathway name" value="Chk1/Chk2(Cds1) mediated inactivation of Cyclin B:Cdk1 complex"/>
</dbReference>
<dbReference type="BioGRID-ORCS" id="35288">
    <property type="hits" value="0 hits in 3 CRISPR screens"/>
</dbReference>
<dbReference type="CD-CODE" id="2838EF58">
    <property type="entry name" value="Centrosome"/>
</dbReference>
<dbReference type="GenomeRNAi" id="35288"/>
<dbReference type="PRO" id="PR:O61267"/>
<dbReference type="Proteomes" id="UP000000803">
    <property type="component" value="Chromosome 2L"/>
</dbReference>
<dbReference type="Bgee" id="FBgn0019686">
    <property type="expression patterns" value="Expressed in cleaving embryo and 96 other cell types or tissues"/>
</dbReference>
<dbReference type="ExpressionAtlas" id="O61267">
    <property type="expression patterns" value="baseline and differential"/>
</dbReference>
<dbReference type="GO" id="GO:0005737">
    <property type="term" value="C:cytoplasm"/>
    <property type="evidence" value="ECO:0000318"/>
    <property type="project" value="GO_Central"/>
</dbReference>
<dbReference type="GO" id="GO:0016607">
    <property type="term" value="C:nuclear speck"/>
    <property type="evidence" value="ECO:0007669"/>
    <property type="project" value="UniProtKB-SubCell"/>
</dbReference>
<dbReference type="GO" id="GO:0005634">
    <property type="term" value="C:nucleus"/>
    <property type="evidence" value="ECO:0000314"/>
    <property type="project" value="UniProtKB"/>
</dbReference>
<dbReference type="GO" id="GO:0005524">
    <property type="term" value="F:ATP binding"/>
    <property type="evidence" value="ECO:0007669"/>
    <property type="project" value="UniProtKB-KW"/>
</dbReference>
<dbReference type="GO" id="GO:0004672">
    <property type="term" value="F:protein kinase activity"/>
    <property type="evidence" value="ECO:0000314"/>
    <property type="project" value="BHF-UCL"/>
</dbReference>
<dbReference type="GO" id="GO:0106310">
    <property type="term" value="F:protein serine kinase activity"/>
    <property type="evidence" value="ECO:0007669"/>
    <property type="project" value="RHEA"/>
</dbReference>
<dbReference type="GO" id="GO:0004674">
    <property type="term" value="F:protein serine/threonine kinase activity"/>
    <property type="evidence" value="ECO:0000318"/>
    <property type="project" value="GO_Central"/>
</dbReference>
<dbReference type="GO" id="GO:0050321">
    <property type="term" value="F:tau-protein kinase activity"/>
    <property type="evidence" value="ECO:0000314"/>
    <property type="project" value="FlyBase"/>
</dbReference>
<dbReference type="GO" id="GO:0006915">
    <property type="term" value="P:apoptotic process"/>
    <property type="evidence" value="ECO:0000315"/>
    <property type="project" value="FlyBase"/>
</dbReference>
<dbReference type="GO" id="GO:0071480">
    <property type="term" value="P:cellular response to gamma radiation"/>
    <property type="evidence" value="ECO:0000315"/>
    <property type="project" value="BHF-UCL"/>
</dbReference>
<dbReference type="GO" id="GO:0071481">
    <property type="term" value="P:cellular response to X-ray"/>
    <property type="evidence" value="ECO:0000315"/>
    <property type="project" value="FlyBase"/>
</dbReference>
<dbReference type="GO" id="GO:0000077">
    <property type="term" value="P:DNA damage checkpoint signaling"/>
    <property type="evidence" value="ECO:0000315"/>
    <property type="project" value="FlyBase"/>
</dbReference>
<dbReference type="GO" id="GO:0006974">
    <property type="term" value="P:DNA damage response"/>
    <property type="evidence" value="ECO:0000315"/>
    <property type="project" value="FlyBase"/>
</dbReference>
<dbReference type="GO" id="GO:0035234">
    <property type="term" value="P:ectopic germ cell programmed cell death"/>
    <property type="evidence" value="ECO:0000315"/>
    <property type="project" value="FlyBase"/>
</dbReference>
<dbReference type="GO" id="GO:0007281">
    <property type="term" value="P:germ cell development"/>
    <property type="evidence" value="ECO:0000270"/>
    <property type="project" value="UniProtKB"/>
</dbReference>
<dbReference type="GO" id="GO:0072332">
    <property type="term" value="P:intrinsic apoptotic signaling pathway by p53 class mediator"/>
    <property type="evidence" value="ECO:0000316"/>
    <property type="project" value="BHF-UCL"/>
</dbReference>
<dbReference type="GO" id="GO:0008630">
    <property type="term" value="P:intrinsic apoptotic signaling pathway in response to DNA damage"/>
    <property type="evidence" value="ECO:0000315"/>
    <property type="project" value="FlyBase"/>
</dbReference>
<dbReference type="GO" id="GO:0044773">
    <property type="term" value="P:mitotic DNA damage checkpoint signaling"/>
    <property type="evidence" value="ECO:0000314"/>
    <property type="project" value="FlyBase"/>
</dbReference>
<dbReference type="GO" id="GO:0030717">
    <property type="term" value="P:oocyte karyosome formation"/>
    <property type="evidence" value="ECO:0000316"/>
    <property type="project" value="FlyBase"/>
</dbReference>
<dbReference type="GO" id="GO:0045944">
    <property type="term" value="P:positive regulation of transcription by RNA polymerase II"/>
    <property type="evidence" value="ECO:0000315"/>
    <property type="project" value="BHF-UCL"/>
</dbReference>
<dbReference type="GO" id="GO:0006468">
    <property type="term" value="P:protein phosphorylation"/>
    <property type="evidence" value="ECO:0000303"/>
    <property type="project" value="UniProtKB"/>
</dbReference>
<dbReference type="GO" id="GO:0006282">
    <property type="term" value="P:regulation of DNA repair"/>
    <property type="evidence" value="ECO:0000315"/>
    <property type="project" value="FlyBase"/>
</dbReference>
<dbReference type="CDD" id="cd22666">
    <property type="entry name" value="FHA_CHK2"/>
    <property type="match status" value="1"/>
</dbReference>
<dbReference type="CDD" id="cd14084">
    <property type="entry name" value="STKc_Chk2"/>
    <property type="match status" value="1"/>
</dbReference>
<dbReference type="FunFam" id="2.60.200.20:FF:000070">
    <property type="entry name" value="Ovarian-specific serine/threonine-protein kinase Lok"/>
    <property type="match status" value="1"/>
</dbReference>
<dbReference type="FunFam" id="1.10.510.10:FF:001010">
    <property type="entry name" value="Serine/threonine-protein kinase Chk2"/>
    <property type="match status" value="1"/>
</dbReference>
<dbReference type="Gene3D" id="2.60.200.20">
    <property type="match status" value="1"/>
</dbReference>
<dbReference type="Gene3D" id="1.10.510.10">
    <property type="entry name" value="Transferase(Phosphotransferase) domain 1"/>
    <property type="match status" value="1"/>
</dbReference>
<dbReference type="InterPro" id="IPR000253">
    <property type="entry name" value="FHA_dom"/>
</dbReference>
<dbReference type="InterPro" id="IPR011009">
    <property type="entry name" value="Kinase-like_dom_sf"/>
</dbReference>
<dbReference type="InterPro" id="IPR000719">
    <property type="entry name" value="Prot_kinase_dom"/>
</dbReference>
<dbReference type="InterPro" id="IPR017441">
    <property type="entry name" value="Protein_kinase_ATP_BS"/>
</dbReference>
<dbReference type="InterPro" id="IPR008271">
    <property type="entry name" value="Ser/Thr_kinase_AS"/>
</dbReference>
<dbReference type="InterPro" id="IPR008984">
    <property type="entry name" value="SMAD_FHA_dom_sf"/>
</dbReference>
<dbReference type="PANTHER" id="PTHR44167">
    <property type="entry name" value="OVARIAN-SPECIFIC SERINE/THREONINE-PROTEIN KINASE LOK-RELATED"/>
    <property type="match status" value="1"/>
</dbReference>
<dbReference type="PANTHER" id="PTHR44167:SF24">
    <property type="entry name" value="SERINE_THREONINE-PROTEIN KINASE CHK2"/>
    <property type="match status" value="1"/>
</dbReference>
<dbReference type="Pfam" id="PF00498">
    <property type="entry name" value="FHA"/>
    <property type="match status" value="1"/>
</dbReference>
<dbReference type="Pfam" id="PF00069">
    <property type="entry name" value="Pkinase"/>
    <property type="match status" value="1"/>
</dbReference>
<dbReference type="SMART" id="SM00240">
    <property type="entry name" value="FHA"/>
    <property type="match status" value="1"/>
</dbReference>
<dbReference type="SMART" id="SM00220">
    <property type="entry name" value="S_TKc"/>
    <property type="match status" value="1"/>
</dbReference>
<dbReference type="SUPFAM" id="SSF56112">
    <property type="entry name" value="Protein kinase-like (PK-like)"/>
    <property type="match status" value="1"/>
</dbReference>
<dbReference type="SUPFAM" id="SSF49879">
    <property type="entry name" value="SMAD/FHA domain"/>
    <property type="match status" value="1"/>
</dbReference>
<dbReference type="PROSITE" id="PS50006">
    <property type="entry name" value="FHA_DOMAIN"/>
    <property type="match status" value="1"/>
</dbReference>
<dbReference type="PROSITE" id="PS00107">
    <property type="entry name" value="PROTEIN_KINASE_ATP"/>
    <property type="match status" value="1"/>
</dbReference>
<dbReference type="PROSITE" id="PS50011">
    <property type="entry name" value="PROTEIN_KINASE_DOM"/>
    <property type="match status" value="1"/>
</dbReference>
<dbReference type="PROSITE" id="PS00108">
    <property type="entry name" value="PROTEIN_KINASE_ST"/>
    <property type="match status" value="1"/>
</dbReference>
<name>LOK_DROME</name>
<proteinExistence type="evidence at transcript level"/>
<keyword id="KW-0025">Alternative splicing</keyword>
<keyword id="KW-0067">ATP-binding</keyword>
<keyword id="KW-0418">Kinase</keyword>
<keyword id="KW-0547">Nucleotide-binding</keyword>
<keyword id="KW-0539">Nucleus</keyword>
<keyword id="KW-1185">Reference proteome</keyword>
<keyword id="KW-0723">Serine/threonine-protein kinase</keyword>
<keyword id="KW-0808">Transferase</keyword>
<evidence type="ECO:0000255" key="1">
    <source>
        <dbReference type="PROSITE-ProRule" id="PRU00086"/>
    </source>
</evidence>
<evidence type="ECO:0000255" key="2">
    <source>
        <dbReference type="PROSITE-ProRule" id="PRU00159"/>
    </source>
</evidence>
<evidence type="ECO:0000255" key="3">
    <source>
        <dbReference type="PROSITE-ProRule" id="PRU10027"/>
    </source>
</evidence>
<evidence type="ECO:0000269" key="4">
    <source>
    </source>
</evidence>
<evidence type="ECO:0000269" key="5">
    <source>
    </source>
</evidence>
<evidence type="ECO:0000303" key="6">
    <source>
    </source>
</evidence>
<evidence type="ECO:0000303" key="7">
    <source>
    </source>
</evidence>
<evidence type="ECO:0000305" key="8"/>
<sequence length="476" mass="54261">MARDTQGTQGTQSQASNIWTQVESQPMEKIVWGRLYGKNIKIKSLGTSSKYRIIYTHSSFSVDLNNDEFTAGRGEANDLILTLNDLPEKILTRISKVHFIIKRANCELTNPVYIQDLSRNGTFVNNEKIGTNRMRILKNDDVISLSHPTYKAFVFKDLSPNESIGLPEEINKTYYVNRKLGSGAYGLVRLVYDTRTCQQFAMKIVKKNMLSGARPSTNFSDPDRVLNEAKIMKNLSHPCVVRMHDIVDKPDSVYMVLEFMRGGDLLNRIISNKLLSEDISKLYFYQMCHAVKYLHDRGITHRDLKPDNVLLETNDEETLLKVSDFGLSKFVQKDSVMRTLCGTPLYVAPEVLITGGREAYTKKVDIWSLGVVLFTCLSGTLPFSDEYGTPAAQQIKKGRFAYGHPSWKSVSQRAKLLINQMLIVDPERRPSIDDVLQSSWLRDAPMLQKAKRLMKLDGMEIEEENFLEPPTKRSRR</sequence>
<accession>O61267</accession>
<accession>O61268</accession>
<accession>P91876</accession>
<accession>Q8SZS3</accession>
<protein>
    <recommendedName>
        <fullName>Ovarian-specific serine/threonine-protein kinase Lok</fullName>
        <ecNumber>2.7.11.1</ecNumber>
    </recommendedName>
    <alternativeName>
        <fullName>Protein loki</fullName>
    </alternativeName>
    <alternativeName>
        <fullName>dMNK</fullName>
    </alternativeName>
</protein>
<gene>
    <name type="primary">lok</name>
    <name type="ORF">CG10895</name>
</gene>
<feature type="chain" id="PRO_0000086237" description="Ovarian-specific serine/threonine-protein kinase Lok">
    <location>
        <begin position="1"/>
        <end position="476"/>
    </location>
</feature>
<feature type="domain" description="FHA" evidence="1 8">
    <location>
        <begin position="69"/>
        <end position="129"/>
    </location>
</feature>
<feature type="domain" description="Protein kinase" evidence="2">
    <location>
        <begin position="174"/>
        <end position="441"/>
    </location>
</feature>
<feature type="active site" description="Proton acceptor" evidence="2 3">
    <location>
        <position position="303"/>
    </location>
</feature>
<feature type="binding site" evidence="2">
    <location>
        <begin position="180"/>
        <end position="188"/>
    </location>
    <ligand>
        <name>ATP</name>
        <dbReference type="ChEBI" id="CHEBI:30616"/>
    </ligand>
</feature>
<feature type="binding site" evidence="2">
    <location>
        <position position="203"/>
    </location>
    <ligand>
        <name>ATP</name>
        <dbReference type="ChEBI" id="CHEBI:30616"/>
    </ligand>
</feature>
<feature type="splice variant" id="VSP_004865" description="In isoform Short." evidence="6 7">
    <location>
        <begin position="46"/>
        <end position="62"/>
    </location>
</feature>
<comment type="function">
    <text evidence="5">May have a role in germline establishment.</text>
</comment>
<comment type="catalytic activity">
    <reaction>
        <text>L-seryl-[protein] + ATP = O-phospho-L-seryl-[protein] + ADP + H(+)</text>
        <dbReference type="Rhea" id="RHEA:17989"/>
        <dbReference type="Rhea" id="RHEA-COMP:9863"/>
        <dbReference type="Rhea" id="RHEA-COMP:11604"/>
        <dbReference type="ChEBI" id="CHEBI:15378"/>
        <dbReference type="ChEBI" id="CHEBI:29999"/>
        <dbReference type="ChEBI" id="CHEBI:30616"/>
        <dbReference type="ChEBI" id="CHEBI:83421"/>
        <dbReference type="ChEBI" id="CHEBI:456216"/>
        <dbReference type="EC" id="2.7.11.1"/>
    </reaction>
</comment>
<comment type="catalytic activity">
    <reaction>
        <text>L-threonyl-[protein] + ATP = O-phospho-L-threonyl-[protein] + ADP + H(+)</text>
        <dbReference type="Rhea" id="RHEA:46608"/>
        <dbReference type="Rhea" id="RHEA-COMP:11060"/>
        <dbReference type="Rhea" id="RHEA-COMP:11605"/>
        <dbReference type="ChEBI" id="CHEBI:15378"/>
        <dbReference type="ChEBI" id="CHEBI:30013"/>
        <dbReference type="ChEBI" id="CHEBI:30616"/>
        <dbReference type="ChEBI" id="CHEBI:61977"/>
        <dbReference type="ChEBI" id="CHEBI:456216"/>
        <dbReference type="EC" id="2.7.11.1"/>
    </reaction>
</comment>
<comment type="subcellular location">
    <subcellularLocation>
        <location evidence="5">Nucleus speckle</location>
    </subcellularLocation>
    <text>Speckled subnuclear compartment.</text>
</comment>
<comment type="alternative products">
    <event type="alternative splicing"/>
    <isoform>
        <id>O61267-1</id>
        <name>Long</name>
        <sequence type="displayed"/>
    </isoform>
    <isoform>
        <id>O61267-2</id>
        <name>Short</name>
        <sequence type="described" ref="VSP_004865"/>
    </isoform>
</comment>
<comment type="tissue specificity">
    <text evidence="5">In stage 3 embryos, both isoforms are expressed in both somatic and pole cell nuclei. Expression in pole cell nuclei is sustained until stage 9 and weakly expressed after pole cell invagination into the abdominal cavity.</text>
</comment>
<comment type="developmental stage">
    <text evidence="5">Expressed both maternally and zygotically in adult females. Levels of the long isoform remain fairly constant from ovaries to embryos, the levels of short isoform decrease dramatically.</text>
</comment>
<comment type="disruption phenotype">
    <text evidence="4">Does not affect male germline stem cells maintenance (PubMed:34644293). In the germline, RNAi-mediated knockdown of Rtel1 in lok mutant background results in partial rescue of single Rtel1 knockdown phenotype which includes loss of germline stem cell and reduced levels of Stat92E expression (PubMed:34644293).</text>
</comment>
<comment type="similarity">
    <text evidence="8">Belongs to the protein kinase superfamily. CAMK Ser/Thr protein kinase family. CDS1 subfamily.</text>
</comment>
<reference evidence="8" key="1">
    <citation type="journal article" date="1998" name="Mech. Dev.">
        <title>A novel Drosophila nuclear protein serine/threonine kinase expressed in the germline during its establishment.</title>
        <authorList>
            <person name="Oishi I."/>
            <person name="Sugiyama S."/>
            <person name="Otani H."/>
            <person name="Yamamura H."/>
            <person name="Nishida Y."/>
            <person name="Minami Y."/>
        </authorList>
    </citation>
    <scope>NUCLEOTIDE SEQUENCE [MRNA] (ISOFORMS LONG AND SHORT)</scope>
    <scope>FUNCTION</scope>
    <scope>SUBCELLULAR LOCATION</scope>
    <scope>TISSUE SPECIFICITY</scope>
    <scope>DEVELOPMENTAL STAGE</scope>
    <source>
        <strain>Canton-S</strain>
        <tissue>Embryo</tissue>
    </source>
</reference>
<reference evidence="8" key="2">
    <citation type="submission" date="1997-01" db="EMBL/GenBank/DDBJ databases">
        <title>Identification of a novel ovarian specific protein kinase.</title>
        <authorList>
            <person name="Larochelle S."/>
            <person name="Suter B."/>
        </authorList>
    </citation>
    <scope>NUCLEOTIDE SEQUENCE (ISOFORM SHORT)</scope>
    <source>
        <strain>Oregon-R</strain>
        <tissue>Ovary</tissue>
    </source>
</reference>
<reference evidence="8" key="3">
    <citation type="journal article" date="2000" name="Science">
        <title>The genome sequence of Drosophila melanogaster.</title>
        <authorList>
            <person name="Adams M.D."/>
            <person name="Celniker S.E."/>
            <person name="Holt R.A."/>
            <person name="Evans C.A."/>
            <person name="Gocayne J.D."/>
            <person name="Amanatides P.G."/>
            <person name="Scherer S.E."/>
            <person name="Li P.W."/>
            <person name="Hoskins R.A."/>
            <person name="Galle R.F."/>
            <person name="George R.A."/>
            <person name="Lewis S.E."/>
            <person name="Richards S."/>
            <person name="Ashburner M."/>
            <person name="Henderson S.N."/>
            <person name="Sutton G.G."/>
            <person name="Wortman J.R."/>
            <person name="Yandell M.D."/>
            <person name="Zhang Q."/>
            <person name="Chen L.X."/>
            <person name="Brandon R.C."/>
            <person name="Rogers Y.-H.C."/>
            <person name="Blazej R.G."/>
            <person name="Champe M."/>
            <person name="Pfeiffer B.D."/>
            <person name="Wan K.H."/>
            <person name="Doyle C."/>
            <person name="Baxter E.G."/>
            <person name="Helt G."/>
            <person name="Nelson C.R."/>
            <person name="Miklos G.L.G."/>
            <person name="Abril J.F."/>
            <person name="Agbayani A."/>
            <person name="An H.-J."/>
            <person name="Andrews-Pfannkoch C."/>
            <person name="Baldwin D."/>
            <person name="Ballew R.M."/>
            <person name="Basu A."/>
            <person name="Baxendale J."/>
            <person name="Bayraktaroglu L."/>
            <person name="Beasley E.M."/>
            <person name="Beeson K.Y."/>
            <person name="Benos P.V."/>
            <person name="Berman B.P."/>
            <person name="Bhandari D."/>
            <person name="Bolshakov S."/>
            <person name="Borkova D."/>
            <person name="Botchan M.R."/>
            <person name="Bouck J."/>
            <person name="Brokstein P."/>
            <person name="Brottier P."/>
            <person name="Burtis K.C."/>
            <person name="Busam D.A."/>
            <person name="Butler H."/>
            <person name="Cadieu E."/>
            <person name="Center A."/>
            <person name="Chandra I."/>
            <person name="Cherry J.M."/>
            <person name="Cawley S."/>
            <person name="Dahlke C."/>
            <person name="Davenport L.B."/>
            <person name="Davies P."/>
            <person name="de Pablos B."/>
            <person name="Delcher A."/>
            <person name="Deng Z."/>
            <person name="Mays A.D."/>
            <person name="Dew I."/>
            <person name="Dietz S.M."/>
            <person name="Dodson K."/>
            <person name="Doup L.E."/>
            <person name="Downes M."/>
            <person name="Dugan-Rocha S."/>
            <person name="Dunkov B.C."/>
            <person name="Dunn P."/>
            <person name="Durbin K.J."/>
            <person name="Evangelista C.C."/>
            <person name="Ferraz C."/>
            <person name="Ferriera S."/>
            <person name="Fleischmann W."/>
            <person name="Fosler C."/>
            <person name="Gabrielian A.E."/>
            <person name="Garg N.S."/>
            <person name="Gelbart W.M."/>
            <person name="Glasser K."/>
            <person name="Glodek A."/>
            <person name="Gong F."/>
            <person name="Gorrell J.H."/>
            <person name="Gu Z."/>
            <person name="Guan P."/>
            <person name="Harris M."/>
            <person name="Harris N.L."/>
            <person name="Harvey D.A."/>
            <person name="Heiman T.J."/>
            <person name="Hernandez J.R."/>
            <person name="Houck J."/>
            <person name="Hostin D."/>
            <person name="Houston K.A."/>
            <person name="Howland T.J."/>
            <person name="Wei M.-H."/>
            <person name="Ibegwam C."/>
            <person name="Jalali M."/>
            <person name="Kalush F."/>
            <person name="Karpen G.H."/>
            <person name="Ke Z."/>
            <person name="Kennison J.A."/>
            <person name="Ketchum K.A."/>
            <person name="Kimmel B.E."/>
            <person name="Kodira C.D."/>
            <person name="Kraft C.L."/>
            <person name="Kravitz S."/>
            <person name="Kulp D."/>
            <person name="Lai Z."/>
            <person name="Lasko P."/>
            <person name="Lei Y."/>
            <person name="Levitsky A.A."/>
            <person name="Li J.H."/>
            <person name="Li Z."/>
            <person name="Liang Y."/>
            <person name="Lin X."/>
            <person name="Liu X."/>
            <person name="Mattei B."/>
            <person name="McIntosh T.C."/>
            <person name="McLeod M.P."/>
            <person name="McPherson D."/>
            <person name="Merkulov G."/>
            <person name="Milshina N.V."/>
            <person name="Mobarry C."/>
            <person name="Morris J."/>
            <person name="Moshrefi A."/>
            <person name="Mount S.M."/>
            <person name="Moy M."/>
            <person name="Murphy B."/>
            <person name="Murphy L."/>
            <person name="Muzny D.M."/>
            <person name="Nelson D.L."/>
            <person name="Nelson D.R."/>
            <person name="Nelson K.A."/>
            <person name="Nixon K."/>
            <person name="Nusskern D.R."/>
            <person name="Pacleb J.M."/>
            <person name="Palazzolo M."/>
            <person name="Pittman G.S."/>
            <person name="Pan S."/>
            <person name="Pollard J."/>
            <person name="Puri V."/>
            <person name="Reese M.G."/>
            <person name="Reinert K."/>
            <person name="Remington K."/>
            <person name="Saunders R.D.C."/>
            <person name="Scheeler F."/>
            <person name="Shen H."/>
            <person name="Shue B.C."/>
            <person name="Siden-Kiamos I."/>
            <person name="Simpson M."/>
            <person name="Skupski M.P."/>
            <person name="Smith T.J."/>
            <person name="Spier E."/>
            <person name="Spradling A.C."/>
            <person name="Stapleton M."/>
            <person name="Strong R."/>
            <person name="Sun E."/>
            <person name="Svirskas R."/>
            <person name="Tector C."/>
            <person name="Turner R."/>
            <person name="Venter E."/>
            <person name="Wang A.H."/>
            <person name="Wang X."/>
            <person name="Wang Z.-Y."/>
            <person name="Wassarman D.A."/>
            <person name="Weinstock G.M."/>
            <person name="Weissenbach J."/>
            <person name="Williams S.M."/>
            <person name="Woodage T."/>
            <person name="Worley K.C."/>
            <person name="Wu D."/>
            <person name="Yang S."/>
            <person name="Yao Q.A."/>
            <person name="Ye J."/>
            <person name="Yeh R.-F."/>
            <person name="Zaveri J.S."/>
            <person name="Zhan M."/>
            <person name="Zhang G."/>
            <person name="Zhao Q."/>
            <person name="Zheng L."/>
            <person name="Zheng X.H."/>
            <person name="Zhong F.N."/>
            <person name="Zhong W."/>
            <person name="Zhou X."/>
            <person name="Zhu S.C."/>
            <person name="Zhu X."/>
            <person name="Smith H.O."/>
            <person name="Gibbs R.A."/>
            <person name="Myers E.W."/>
            <person name="Rubin G.M."/>
            <person name="Venter J.C."/>
        </authorList>
    </citation>
    <scope>NUCLEOTIDE SEQUENCE [LARGE SCALE GENOMIC DNA]</scope>
    <source>
        <strain>Berkeley</strain>
    </source>
</reference>
<reference key="4">
    <citation type="journal article" date="2002" name="Genome Biol.">
        <title>Annotation of the Drosophila melanogaster euchromatic genome: a systematic review.</title>
        <authorList>
            <person name="Misra S."/>
            <person name="Crosby M.A."/>
            <person name="Mungall C.J."/>
            <person name="Matthews B.B."/>
            <person name="Campbell K.S."/>
            <person name="Hradecky P."/>
            <person name="Huang Y."/>
            <person name="Kaminker J.S."/>
            <person name="Millburn G.H."/>
            <person name="Prochnik S.E."/>
            <person name="Smith C.D."/>
            <person name="Tupy J.L."/>
            <person name="Whitfield E.J."/>
            <person name="Bayraktaroglu L."/>
            <person name="Berman B.P."/>
            <person name="Bettencourt B.R."/>
            <person name="Celniker S.E."/>
            <person name="de Grey A.D.N.J."/>
            <person name="Drysdale R.A."/>
            <person name="Harris N.L."/>
            <person name="Richter J."/>
            <person name="Russo S."/>
            <person name="Schroeder A.J."/>
            <person name="Shu S.Q."/>
            <person name="Stapleton M."/>
            <person name="Yamada C."/>
            <person name="Ashburner M."/>
            <person name="Gelbart W.M."/>
            <person name="Rubin G.M."/>
            <person name="Lewis S.E."/>
        </authorList>
    </citation>
    <scope>GENOME REANNOTATION</scope>
    <scope>ALTERNATIVE SPLICING</scope>
    <source>
        <strain>Berkeley</strain>
    </source>
</reference>
<reference key="5">
    <citation type="journal article" date="2002" name="Genome Biol.">
        <title>A Drosophila full-length cDNA resource.</title>
        <authorList>
            <person name="Stapleton M."/>
            <person name="Carlson J.W."/>
            <person name="Brokstein P."/>
            <person name="Yu C."/>
            <person name="Champe M."/>
            <person name="George R.A."/>
            <person name="Guarin H."/>
            <person name="Kronmiller B."/>
            <person name="Pacleb J.M."/>
            <person name="Park S."/>
            <person name="Wan K.H."/>
            <person name="Rubin G.M."/>
            <person name="Celniker S.E."/>
        </authorList>
    </citation>
    <scope>NUCLEOTIDE SEQUENCE [LARGE SCALE MRNA] (ISOFORM SHORT)</scope>
    <source>
        <strain>Berkeley</strain>
        <tissue>Embryo</tissue>
    </source>
</reference>
<reference key="6">
    <citation type="journal article" date="2021" name="PLoS Genet.">
        <title>dRTEL1 is essential for the maintenance of Drosophila male germline stem cells.</title>
        <authorList>
            <person name="Yang Y."/>
            <person name="Kong R."/>
            <person name="Goh F.G."/>
            <person name="Somers W.G."/>
            <person name="Hime G.R."/>
            <person name="Li Z."/>
            <person name="Cai Y."/>
        </authorList>
    </citation>
    <scope>DISRUPTION PHENOTYPE</scope>
</reference>
<organism>
    <name type="scientific">Drosophila melanogaster</name>
    <name type="common">Fruit fly</name>
    <dbReference type="NCBI Taxonomy" id="7227"/>
    <lineage>
        <taxon>Eukaryota</taxon>
        <taxon>Metazoa</taxon>
        <taxon>Ecdysozoa</taxon>
        <taxon>Arthropoda</taxon>
        <taxon>Hexapoda</taxon>
        <taxon>Insecta</taxon>
        <taxon>Pterygota</taxon>
        <taxon>Neoptera</taxon>
        <taxon>Endopterygota</taxon>
        <taxon>Diptera</taxon>
        <taxon>Brachycera</taxon>
        <taxon>Muscomorpha</taxon>
        <taxon>Ephydroidea</taxon>
        <taxon>Drosophilidae</taxon>
        <taxon>Drosophila</taxon>
        <taxon>Sophophora</taxon>
    </lineage>
</organism>